<comment type="function">
    <text evidence="1">Catalyzes the hydrolytic deamination of adenine to hypoxanthine. Plays an important role in the purine salvage pathway and in nitrogen catabolism.</text>
</comment>
<comment type="catalytic activity">
    <reaction evidence="1">
        <text>adenine + H2O + H(+) = hypoxanthine + NH4(+)</text>
        <dbReference type="Rhea" id="RHEA:23688"/>
        <dbReference type="ChEBI" id="CHEBI:15377"/>
        <dbReference type="ChEBI" id="CHEBI:15378"/>
        <dbReference type="ChEBI" id="CHEBI:16708"/>
        <dbReference type="ChEBI" id="CHEBI:17368"/>
        <dbReference type="ChEBI" id="CHEBI:28938"/>
        <dbReference type="EC" id="3.5.4.2"/>
    </reaction>
</comment>
<comment type="cofactor">
    <cofactor evidence="1">
        <name>Zn(2+)</name>
        <dbReference type="ChEBI" id="CHEBI:29105"/>
    </cofactor>
    <text evidence="1">Binds 1 zinc ion per subunit.</text>
</comment>
<comment type="similarity">
    <text evidence="1">Belongs to the metallo-dependent hydrolases superfamily. Adenosine and AMP deaminases family. Adenine deaminase type 2 subfamily.</text>
</comment>
<reference key="1">
    <citation type="journal article" date="2001" name="Proc. Natl. Acad. Sci. U.S.A.">
        <title>Complete genome sequence of Caulobacter crescentus.</title>
        <authorList>
            <person name="Nierman W.C."/>
            <person name="Feldblyum T.V."/>
            <person name="Laub M.T."/>
            <person name="Paulsen I.T."/>
            <person name="Nelson K.E."/>
            <person name="Eisen J.A."/>
            <person name="Heidelberg J.F."/>
            <person name="Alley M.R.K."/>
            <person name="Ohta N."/>
            <person name="Maddock J.R."/>
            <person name="Potocka I."/>
            <person name="Nelson W.C."/>
            <person name="Newton A."/>
            <person name="Stephens C."/>
            <person name="Phadke N.D."/>
            <person name="Ely B."/>
            <person name="DeBoy R.T."/>
            <person name="Dodson R.J."/>
            <person name="Durkin A.S."/>
            <person name="Gwinn M.L."/>
            <person name="Haft D.H."/>
            <person name="Kolonay J.F."/>
            <person name="Smit J."/>
            <person name="Craven M.B."/>
            <person name="Khouri H.M."/>
            <person name="Shetty J."/>
            <person name="Berry K.J."/>
            <person name="Utterback T.R."/>
            <person name="Tran K."/>
            <person name="Wolf A.M."/>
            <person name="Vamathevan J.J."/>
            <person name="Ermolaeva M.D."/>
            <person name="White O."/>
            <person name="Salzberg S.L."/>
            <person name="Venter J.C."/>
            <person name="Shapiro L."/>
            <person name="Fraser C.M."/>
        </authorList>
    </citation>
    <scope>NUCLEOTIDE SEQUENCE [LARGE SCALE GENOMIC DNA]</scope>
    <source>
        <strain>ATCC 19089 / CIP 103742 / CB 15</strain>
    </source>
</reference>
<proteinExistence type="inferred from homology"/>
<evidence type="ECO:0000255" key="1">
    <source>
        <dbReference type="HAMAP-Rule" id="MF_01962"/>
    </source>
</evidence>
<sequence length="344" mass="37193">MTDASFAPSASAEFVRGLPKAELHMHIEGSLEPELMFELAQRNGITLPFASVEEIRAAYDFSNLQDFLDIYYQGAGVLITEADFKDLALAYFQRLAADGGAHAEIFFDPQTHTDRGIAFDTVMNGLLAGMDEAEKTLGVTSKLILCFLRHLSEEAAFETLEQAKPWLAKLAGVGLDSSEVGHPPAKFARVLQASRDLGLKVVAHAGEEGPPAYVWEAIDLVKVDRIDHGNRALEDEALTARLVKDGITLTVCPLSNLKLCGVPSLDVHPLKRMLDLGLKATVNSDDPAYFGGYLLENYLATADAVGLTRDDIVTLAKNSFAGSFLTDAEKAQRIAAVEAYAAAH</sequence>
<organism>
    <name type="scientific">Caulobacter vibrioides (strain ATCC 19089 / CIP 103742 / CB 15)</name>
    <name type="common">Caulobacter crescentus</name>
    <dbReference type="NCBI Taxonomy" id="190650"/>
    <lineage>
        <taxon>Bacteria</taxon>
        <taxon>Pseudomonadati</taxon>
        <taxon>Pseudomonadota</taxon>
        <taxon>Alphaproteobacteria</taxon>
        <taxon>Caulobacterales</taxon>
        <taxon>Caulobacteraceae</taxon>
        <taxon>Caulobacter</taxon>
    </lineage>
</organism>
<protein>
    <recommendedName>
        <fullName evidence="1">Adenine deaminase</fullName>
        <shortName evidence="1">ADE</shortName>
        <ecNumber evidence="1">3.5.4.2</ecNumber>
    </recommendedName>
    <alternativeName>
        <fullName evidence="1">Adenine aminohydrolase</fullName>
        <shortName evidence="1">AAH</shortName>
    </alternativeName>
</protein>
<keyword id="KW-0378">Hydrolase</keyword>
<keyword id="KW-0479">Metal-binding</keyword>
<keyword id="KW-0546">Nucleotide metabolism</keyword>
<keyword id="KW-1185">Reference proteome</keyword>
<keyword id="KW-0862">Zinc</keyword>
<name>ADE_CAUVC</name>
<dbReference type="EC" id="3.5.4.2" evidence="1"/>
<dbReference type="EMBL" id="AE005673">
    <property type="protein sequence ID" value="AAK25142.1"/>
    <property type="molecule type" value="Genomic_DNA"/>
</dbReference>
<dbReference type="PIR" id="B87643">
    <property type="entry name" value="B87643"/>
</dbReference>
<dbReference type="RefSeq" id="NP_421974.1">
    <property type="nucleotide sequence ID" value="NC_002696.2"/>
</dbReference>
<dbReference type="RefSeq" id="WP_010921016.1">
    <property type="nucleotide sequence ID" value="NC_002696.2"/>
</dbReference>
<dbReference type="SMR" id="Q9A3M3"/>
<dbReference type="STRING" id="190650.CC_3180"/>
<dbReference type="EnsemblBacteria" id="AAK25142">
    <property type="protein sequence ID" value="AAK25142"/>
    <property type="gene ID" value="CC_3180"/>
</dbReference>
<dbReference type="KEGG" id="ccr:CC_3180"/>
<dbReference type="PATRIC" id="fig|190650.5.peg.3187"/>
<dbReference type="eggNOG" id="COG1816">
    <property type="taxonomic scope" value="Bacteria"/>
</dbReference>
<dbReference type="HOGENOM" id="CLU_039228_7_0_5"/>
<dbReference type="BioCyc" id="CAULO:CC3180-MONOMER"/>
<dbReference type="Proteomes" id="UP000001816">
    <property type="component" value="Chromosome"/>
</dbReference>
<dbReference type="GO" id="GO:0005829">
    <property type="term" value="C:cytosol"/>
    <property type="evidence" value="ECO:0007669"/>
    <property type="project" value="TreeGrafter"/>
</dbReference>
<dbReference type="GO" id="GO:0000034">
    <property type="term" value="F:adenine deaminase activity"/>
    <property type="evidence" value="ECO:0007669"/>
    <property type="project" value="UniProtKB-UniRule"/>
</dbReference>
<dbReference type="GO" id="GO:0008270">
    <property type="term" value="F:zinc ion binding"/>
    <property type="evidence" value="ECO:0007669"/>
    <property type="project" value="UniProtKB-UniRule"/>
</dbReference>
<dbReference type="GO" id="GO:0006146">
    <property type="term" value="P:adenine catabolic process"/>
    <property type="evidence" value="ECO:0007669"/>
    <property type="project" value="UniProtKB-UniRule"/>
</dbReference>
<dbReference type="GO" id="GO:0043103">
    <property type="term" value="P:hypoxanthine salvage"/>
    <property type="evidence" value="ECO:0007669"/>
    <property type="project" value="UniProtKB-UniRule"/>
</dbReference>
<dbReference type="GO" id="GO:0009117">
    <property type="term" value="P:nucleotide metabolic process"/>
    <property type="evidence" value="ECO:0007669"/>
    <property type="project" value="UniProtKB-KW"/>
</dbReference>
<dbReference type="CDD" id="cd01320">
    <property type="entry name" value="ADA"/>
    <property type="match status" value="1"/>
</dbReference>
<dbReference type="FunFam" id="3.20.20.140:FF:000039">
    <property type="entry name" value="Adenine deaminase"/>
    <property type="match status" value="1"/>
</dbReference>
<dbReference type="Gene3D" id="3.20.20.140">
    <property type="entry name" value="Metal-dependent hydrolases"/>
    <property type="match status" value="1"/>
</dbReference>
<dbReference type="HAMAP" id="MF_01962">
    <property type="entry name" value="Adenine_deaminase"/>
    <property type="match status" value="1"/>
</dbReference>
<dbReference type="InterPro" id="IPR001365">
    <property type="entry name" value="A_deaminase_dom"/>
</dbReference>
<dbReference type="InterPro" id="IPR028892">
    <property type="entry name" value="ADE"/>
</dbReference>
<dbReference type="InterPro" id="IPR006330">
    <property type="entry name" value="Ado/ade_deaminase"/>
</dbReference>
<dbReference type="InterPro" id="IPR032466">
    <property type="entry name" value="Metal_Hydrolase"/>
</dbReference>
<dbReference type="NCBIfam" id="TIGR01430">
    <property type="entry name" value="aden_deam"/>
    <property type="match status" value="1"/>
</dbReference>
<dbReference type="NCBIfam" id="NF006850">
    <property type="entry name" value="PRK09358.1-6"/>
    <property type="match status" value="1"/>
</dbReference>
<dbReference type="PANTHER" id="PTHR43114">
    <property type="entry name" value="ADENINE DEAMINASE"/>
    <property type="match status" value="1"/>
</dbReference>
<dbReference type="PANTHER" id="PTHR43114:SF6">
    <property type="entry name" value="ADENINE DEAMINASE"/>
    <property type="match status" value="1"/>
</dbReference>
<dbReference type="Pfam" id="PF00962">
    <property type="entry name" value="A_deaminase"/>
    <property type="match status" value="1"/>
</dbReference>
<dbReference type="SUPFAM" id="SSF51556">
    <property type="entry name" value="Metallo-dependent hydrolases"/>
    <property type="match status" value="1"/>
</dbReference>
<gene>
    <name type="ordered locus">CC_3180</name>
</gene>
<accession>Q9A3M3</accession>
<feature type="chain" id="PRO_0000194364" description="Adenine deaminase">
    <location>
        <begin position="1"/>
        <end position="344"/>
    </location>
</feature>
<feature type="active site" description="Proton donor" evidence="1">
    <location>
        <position position="207"/>
    </location>
</feature>
<feature type="binding site" evidence="1">
    <location>
        <position position="24"/>
    </location>
    <ligand>
        <name>Zn(2+)</name>
        <dbReference type="ChEBI" id="CHEBI:29105"/>
        <note>catalytic</note>
    </ligand>
</feature>
<feature type="binding site" evidence="1">
    <location>
        <position position="26"/>
    </location>
    <ligand>
        <name>Zn(2+)</name>
        <dbReference type="ChEBI" id="CHEBI:29105"/>
        <note>catalytic</note>
    </ligand>
</feature>
<feature type="binding site" evidence="1">
    <location>
        <position position="204"/>
    </location>
    <ligand>
        <name>Zn(2+)</name>
        <dbReference type="ChEBI" id="CHEBI:29105"/>
        <note>catalytic</note>
    </ligand>
</feature>
<feature type="binding site" evidence="1">
    <location>
        <position position="285"/>
    </location>
    <ligand>
        <name>Zn(2+)</name>
        <dbReference type="ChEBI" id="CHEBI:29105"/>
        <note>catalytic</note>
    </ligand>
</feature>
<feature type="binding site" evidence="1">
    <location>
        <position position="286"/>
    </location>
    <ligand>
        <name>substrate</name>
    </ligand>
</feature>
<feature type="site" description="Important for catalytic activity" evidence="1">
    <location>
        <position position="228"/>
    </location>
</feature>